<reference key="1">
    <citation type="journal article" date="2002" name="Nature">
        <title>Comparison of the genomes of two Xanthomonas pathogens with differing host specificities.</title>
        <authorList>
            <person name="da Silva A.C.R."/>
            <person name="Ferro J.A."/>
            <person name="Reinach F.C."/>
            <person name="Farah C.S."/>
            <person name="Furlan L.R."/>
            <person name="Quaggio R.B."/>
            <person name="Monteiro-Vitorello C.B."/>
            <person name="Van Sluys M.A."/>
            <person name="Almeida N.F. Jr."/>
            <person name="Alves L.M.C."/>
            <person name="do Amaral A.M."/>
            <person name="Bertolini M.C."/>
            <person name="Camargo L.E.A."/>
            <person name="Camarotte G."/>
            <person name="Cannavan F."/>
            <person name="Cardozo J."/>
            <person name="Chambergo F."/>
            <person name="Ciapina L.P."/>
            <person name="Cicarelli R.M.B."/>
            <person name="Coutinho L.L."/>
            <person name="Cursino-Santos J.R."/>
            <person name="El-Dorry H."/>
            <person name="Faria J.B."/>
            <person name="Ferreira A.J.S."/>
            <person name="Ferreira R.C.C."/>
            <person name="Ferro M.I.T."/>
            <person name="Formighieri E.F."/>
            <person name="Franco M.C."/>
            <person name="Greggio C.C."/>
            <person name="Gruber A."/>
            <person name="Katsuyama A.M."/>
            <person name="Kishi L.T."/>
            <person name="Leite R.P."/>
            <person name="Lemos E.G.M."/>
            <person name="Lemos M.V.F."/>
            <person name="Locali E.C."/>
            <person name="Machado M.A."/>
            <person name="Madeira A.M.B.N."/>
            <person name="Martinez-Rossi N.M."/>
            <person name="Martins E.C."/>
            <person name="Meidanis J."/>
            <person name="Menck C.F.M."/>
            <person name="Miyaki C.Y."/>
            <person name="Moon D.H."/>
            <person name="Moreira L.M."/>
            <person name="Novo M.T.M."/>
            <person name="Okura V.K."/>
            <person name="Oliveira M.C."/>
            <person name="Oliveira V.R."/>
            <person name="Pereira H.A."/>
            <person name="Rossi A."/>
            <person name="Sena J.A.D."/>
            <person name="Silva C."/>
            <person name="de Souza R.F."/>
            <person name="Spinola L.A.F."/>
            <person name="Takita M.A."/>
            <person name="Tamura R.E."/>
            <person name="Teixeira E.C."/>
            <person name="Tezza R.I.D."/>
            <person name="Trindade dos Santos M."/>
            <person name="Truffi D."/>
            <person name="Tsai S.M."/>
            <person name="White F.F."/>
            <person name="Setubal J.C."/>
            <person name="Kitajima J.P."/>
        </authorList>
    </citation>
    <scope>NUCLEOTIDE SEQUENCE [LARGE SCALE GENOMIC DNA]</scope>
    <source>
        <strain>306</strain>
    </source>
</reference>
<comment type="similarity">
    <text evidence="2">Belongs to the UPF0213 family.</text>
</comment>
<dbReference type="EMBL" id="AE008923">
    <property type="protein sequence ID" value="AAM38046.1"/>
    <property type="molecule type" value="Genomic_DNA"/>
</dbReference>
<dbReference type="RefSeq" id="WP_005915765.1">
    <property type="nucleotide sequence ID" value="NC_003919.1"/>
</dbReference>
<dbReference type="SMR" id="Q8PHP7"/>
<dbReference type="KEGG" id="xac:XAC3202"/>
<dbReference type="eggNOG" id="COG2827">
    <property type="taxonomic scope" value="Bacteria"/>
</dbReference>
<dbReference type="HOGENOM" id="CLU_135650_0_2_6"/>
<dbReference type="Proteomes" id="UP000000576">
    <property type="component" value="Chromosome"/>
</dbReference>
<dbReference type="CDD" id="cd10456">
    <property type="entry name" value="GIY-YIG_UPF0213"/>
    <property type="match status" value="1"/>
</dbReference>
<dbReference type="Gene3D" id="3.40.1440.10">
    <property type="entry name" value="GIY-YIG endonuclease"/>
    <property type="match status" value="1"/>
</dbReference>
<dbReference type="InterPro" id="IPR000305">
    <property type="entry name" value="GIY-YIG_endonuc"/>
</dbReference>
<dbReference type="InterPro" id="IPR035901">
    <property type="entry name" value="GIY-YIG_endonuc_sf"/>
</dbReference>
<dbReference type="InterPro" id="IPR050190">
    <property type="entry name" value="UPF0213_domain"/>
</dbReference>
<dbReference type="PANTHER" id="PTHR34477">
    <property type="entry name" value="UPF0213 PROTEIN YHBQ"/>
    <property type="match status" value="1"/>
</dbReference>
<dbReference type="PANTHER" id="PTHR34477:SF1">
    <property type="entry name" value="UPF0213 PROTEIN YHBQ"/>
    <property type="match status" value="1"/>
</dbReference>
<dbReference type="Pfam" id="PF01541">
    <property type="entry name" value="GIY-YIG"/>
    <property type="match status" value="1"/>
</dbReference>
<dbReference type="SUPFAM" id="SSF82771">
    <property type="entry name" value="GIY-YIG endonuclease"/>
    <property type="match status" value="1"/>
</dbReference>
<dbReference type="PROSITE" id="PS50164">
    <property type="entry name" value="GIY_YIG"/>
    <property type="match status" value="1"/>
</dbReference>
<evidence type="ECO:0000255" key="1">
    <source>
        <dbReference type="PROSITE-ProRule" id="PRU00977"/>
    </source>
</evidence>
<evidence type="ECO:0000305" key="2"/>
<gene>
    <name type="ordered locus">XAC3202</name>
</gene>
<protein>
    <recommendedName>
        <fullName>UPF0213 protein XAC3202</fullName>
    </recommendedName>
</protein>
<proteinExistence type="inferred from homology"/>
<accession>Q8PHP7</accession>
<feature type="chain" id="PRO_0000161400" description="UPF0213 protein XAC3202">
    <location>
        <begin position="1"/>
        <end position="102"/>
    </location>
</feature>
<feature type="domain" description="GIY-YIG" evidence="1">
    <location>
        <begin position="5"/>
        <end position="80"/>
    </location>
</feature>
<organism>
    <name type="scientific">Xanthomonas axonopodis pv. citri (strain 306)</name>
    <dbReference type="NCBI Taxonomy" id="190486"/>
    <lineage>
        <taxon>Bacteria</taxon>
        <taxon>Pseudomonadati</taxon>
        <taxon>Pseudomonadota</taxon>
        <taxon>Gammaproteobacteria</taxon>
        <taxon>Lysobacterales</taxon>
        <taxon>Lysobacteraceae</taxon>
        <taxon>Xanthomonas</taxon>
    </lineage>
</organism>
<sequence length="102" mass="11597">MDALKPWHLYLLLCRNGSYYAGITNDLERRFQAHLRGTGARYTRANPPVQMLASHPYPDRASASRAECALKRLPRARKLAWLQAQPRTVHESQPADASITRV</sequence>
<name>Y3202_XANAC</name>